<dbReference type="EC" id="2.4.99.27" evidence="2"/>
<dbReference type="EMBL" id="AY670704">
    <property type="protein sequence ID" value="AAV85961.1"/>
    <property type="molecule type" value="Genomic_DNA"/>
</dbReference>
<dbReference type="TCDB" id="9.B.67.3.1">
    <property type="family name" value="the o-antigen polymerase (oap) family"/>
</dbReference>
<dbReference type="BioCyc" id="MetaCyc:MONOMER-21444"/>
<dbReference type="UniPathway" id="UPA00281"/>
<dbReference type="GO" id="GO:0005886">
    <property type="term" value="C:plasma membrane"/>
    <property type="evidence" value="ECO:0007669"/>
    <property type="project" value="UniProtKB-SubCell"/>
</dbReference>
<dbReference type="GO" id="GO:0016740">
    <property type="term" value="F:transferase activity"/>
    <property type="evidence" value="ECO:0007669"/>
    <property type="project" value="UniProtKB-KW"/>
</dbReference>
<dbReference type="GO" id="GO:0009103">
    <property type="term" value="P:lipopolysaccharide biosynthetic process"/>
    <property type="evidence" value="ECO:0007669"/>
    <property type="project" value="UniProtKB-KW"/>
</dbReference>
<organism>
    <name type="scientific">Escherichia coli</name>
    <dbReference type="NCBI Taxonomy" id="562"/>
    <lineage>
        <taxon>Bacteria</taxon>
        <taxon>Pseudomonadati</taxon>
        <taxon>Pseudomonadota</taxon>
        <taxon>Gammaproteobacteria</taxon>
        <taxon>Enterobacterales</taxon>
        <taxon>Enterobacteriaceae</taxon>
        <taxon>Escherichia</taxon>
    </lineage>
</organism>
<feature type="chain" id="PRO_0000460970" description="O-antigen polymerase">
    <location>
        <begin position="1"/>
        <end position="446"/>
    </location>
</feature>
<feature type="transmembrane region" description="Helical" evidence="1">
    <location>
        <begin position="11"/>
        <end position="31"/>
    </location>
</feature>
<feature type="transmembrane region" description="Helical" evidence="1">
    <location>
        <begin position="33"/>
        <end position="53"/>
    </location>
</feature>
<feature type="transmembrane region" description="Helical" evidence="1">
    <location>
        <begin position="58"/>
        <end position="78"/>
    </location>
</feature>
<feature type="transmembrane region" description="Helical" evidence="1">
    <location>
        <begin position="104"/>
        <end position="124"/>
    </location>
</feature>
<feature type="transmembrane region" description="Helical" evidence="1">
    <location>
        <begin position="147"/>
        <end position="167"/>
    </location>
</feature>
<feature type="transmembrane region" description="Helical" evidence="1">
    <location>
        <begin position="186"/>
        <end position="206"/>
    </location>
</feature>
<feature type="transmembrane region" description="Helical" evidence="1">
    <location>
        <begin position="211"/>
        <end position="231"/>
    </location>
</feature>
<feature type="transmembrane region" description="Helical" evidence="1">
    <location>
        <begin position="252"/>
        <end position="272"/>
    </location>
</feature>
<feature type="transmembrane region" description="Helical" evidence="1">
    <location>
        <begin position="355"/>
        <end position="375"/>
    </location>
</feature>
<feature type="transmembrane region" description="Helical" evidence="1">
    <location>
        <begin position="391"/>
        <end position="411"/>
    </location>
</feature>
<feature type="transmembrane region" description="Helical" evidence="1">
    <location>
        <begin position="415"/>
        <end position="435"/>
    </location>
</feature>
<proteinExistence type="evidence at protein level"/>
<name>WZY_ECOLX</name>
<evidence type="ECO:0000255" key="1"/>
<evidence type="ECO:0000269" key="2">
    <source>
    </source>
</evidence>
<evidence type="ECO:0000303" key="3">
    <source>
    </source>
</evidence>
<evidence type="ECO:0000305" key="4">
    <source>
    </source>
</evidence>
<accession>Q58YW1</accession>
<reference key="1">
    <citation type="journal article" date="2005" name="Vet. Microbiol.">
        <title>Characterization of Escherichia coli O86 O-antigen gene cluster and identification of O86-specific genes.</title>
        <authorList>
            <person name="Feng L."/>
            <person name="Han W."/>
            <person name="Wang Q."/>
            <person name="Bastin D.A."/>
            <person name="Wang L."/>
        </authorList>
    </citation>
    <scope>NUCLEOTIDE SEQUENCE [GENOMIC DNA]</scope>
    <source>
        <strain>O86</strain>
    </source>
</reference>
<reference key="2">
    <citation type="journal article" date="2010" name="Nat. Chem. Biol.">
        <title>In vitro bacterial polysaccharide biosynthesis: defining the functions of Wzy and Wzz.</title>
        <authorList>
            <person name="Woodward R."/>
            <person name="Yi W."/>
            <person name="Li L."/>
            <person name="Zhao G."/>
            <person name="Eguchi H."/>
            <person name="Sridhar P.R."/>
            <person name="Guo H."/>
            <person name="Song J.K."/>
            <person name="Motari E."/>
            <person name="Cai L."/>
            <person name="Kelleher P."/>
            <person name="Liu X."/>
            <person name="Han W."/>
            <person name="Zhang W."/>
            <person name="Ding Y."/>
            <person name="Li M."/>
            <person name="Wang P.G."/>
        </authorList>
    </citation>
    <scope>FUNCTION</scope>
    <scope>CATALYTIC ACTIVITY</scope>
    <scope>PATHWAY</scope>
    <source>
        <strain>O86:K61:B7 / ATCC 12701</strain>
    </source>
</reference>
<keyword id="KW-0997">Cell inner membrane</keyword>
<keyword id="KW-1003">Cell membrane</keyword>
<keyword id="KW-0448">Lipopolysaccharide biosynthesis</keyword>
<keyword id="KW-0472">Membrane</keyword>
<keyword id="KW-0808">Transferase</keyword>
<keyword id="KW-0812">Transmembrane</keyword>
<keyword id="KW-1133">Transmembrane helix</keyword>
<gene>
    <name evidence="3" type="primary">wzy</name>
</gene>
<protein>
    <recommendedName>
        <fullName evidence="3">O-antigen polymerase</fullName>
        <ecNumber evidence="2">2.4.99.27</ecNumber>
    </recommendedName>
</protein>
<sequence>MVISRSNYRNICSYTFFMVNLFILILSVINEGFCEIAYVIISVSSVLFCVIIICLERQGGFLNPMTFCIISVFFFILIRPVFFSQNITENLNEVITAGLEIDEIYVFYSLAVVNIPLAFTVLLYSVQKGTVSKLVGQLPDLFFYNKQLSMILLWGGLFSAIFLIKSYKKFIILGQVSVFEADAYGLYDELFWFTLSKYCYILSLLFSKNKNFILYSLLIFITSIGYILVGLRGYTIAYGFLLLFFLDIRYRLKIKWLLLVAILVTTISSLFLNYRIGIEVNSGLLGIIFNPLLQQGASFETVYGALKYNEKILSCISYYDYFFTNKDIGSCIDIARGVYFKEGGSFASSFYSELIYLGWIIGSVALLLFAFSLAFVQSCYEKIIKNSMNNKLAYTYRLIIFLALPNLIYFARSSLFDFITKVLFIALFIGGLSIVRHIALNIKKCH</sequence>
<comment type="function">
    <text evidence="2">Polymerase involved in the biosynthesis of the lipopolysaccharide (LPS) (PubMed:20418877). Catalyzes the polymerization of the O-antigen repeat units on the periplasmic face of the inner membrane, leading to the formation of the lipid-linked O-antigen molecule (PubMed:20418877). In vitro, shows a preference for bacteria-based, undecaprenyl-containing substrates rather than eukaryote-based, dolichol-containing substrates (PubMed:20418877).</text>
</comment>
<comment type="catalytic activity">
    <reaction evidence="2">
        <text>n lipid-linked O-antigen repeat units = a lipid-linked O antigen + (n-1) polyisoprenyl diphosphate.</text>
        <dbReference type="EC" id="2.4.99.27"/>
    </reaction>
</comment>
<comment type="pathway">
    <text evidence="2">Bacterial outer membrane biogenesis; LPS O-antigen biosynthesis.</text>
</comment>
<comment type="subcellular location">
    <subcellularLocation>
        <location evidence="4">Cell inner membrane</location>
        <topology evidence="1">Multi-pass membrane protein</topology>
    </subcellularLocation>
</comment>